<proteinExistence type="inferred from homology"/>
<sequence>MHCPFCSAVDTKVIDSRLVAEGHQVRRRRECLLCHERFTTFEMAELVMPRVIKSNGSREPFNEDKLRAGILRALEKRPVSMEAIEKAVNHIKSRLRATGEREVASQLVGNLVMDELKSLDKVAYIRFASVYRSFEDIREFGEEIAKLEK</sequence>
<evidence type="ECO:0000255" key="1">
    <source>
        <dbReference type="HAMAP-Rule" id="MF_00440"/>
    </source>
</evidence>
<dbReference type="EMBL" id="CP000462">
    <property type="protein sequence ID" value="ABK39204.1"/>
    <property type="molecule type" value="Genomic_DNA"/>
</dbReference>
<dbReference type="RefSeq" id="WP_010675395.1">
    <property type="nucleotide sequence ID" value="NC_008570.1"/>
</dbReference>
<dbReference type="RefSeq" id="YP_857823.1">
    <property type="nucleotide sequence ID" value="NC_008570.1"/>
</dbReference>
<dbReference type="SMR" id="A0KNH2"/>
<dbReference type="STRING" id="380703.AHA_3334"/>
<dbReference type="EnsemblBacteria" id="ABK39204">
    <property type="protein sequence ID" value="ABK39204"/>
    <property type="gene ID" value="AHA_3334"/>
</dbReference>
<dbReference type="GeneID" id="69411056"/>
<dbReference type="KEGG" id="aha:AHA_3334"/>
<dbReference type="PATRIC" id="fig|380703.7.peg.3328"/>
<dbReference type="eggNOG" id="COG1327">
    <property type="taxonomic scope" value="Bacteria"/>
</dbReference>
<dbReference type="HOGENOM" id="CLU_108412_0_0_6"/>
<dbReference type="OrthoDB" id="9807461at2"/>
<dbReference type="Proteomes" id="UP000000756">
    <property type="component" value="Chromosome"/>
</dbReference>
<dbReference type="GO" id="GO:0005524">
    <property type="term" value="F:ATP binding"/>
    <property type="evidence" value="ECO:0007669"/>
    <property type="project" value="UniProtKB-KW"/>
</dbReference>
<dbReference type="GO" id="GO:0003677">
    <property type="term" value="F:DNA binding"/>
    <property type="evidence" value="ECO:0007669"/>
    <property type="project" value="UniProtKB-KW"/>
</dbReference>
<dbReference type="GO" id="GO:0008270">
    <property type="term" value="F:zinc ion binding"/>
    <property type="evidence" value="ECO:0007669"/>
    <property type="project" value="UniProtKB-UniRule"/>
</dbReference>
<dbReference type="GO" id="GO:0045892">
    <property type="term" value="P:negative regulation of DNA-templated transcription"/>
    <property type="evidence" value="ECO:0007669"/>
    <property type="project" value="UniProtKB-UniRule"/>
</dbReference>
<dbReference type="HAMAP" id="MF_00440">
    <property type="entry name" value="NrdR"/>
    <property type="match status" value="1"/>
</dbReference>
<dbReference type="InterPro" id="IPR005144">
    <property type="entry name" value="ATP-cone_dom"/>
</dbReference>
<dbReference type="InterPro" id="IPR055173">
    <property type="entry name" value="NrdR-like_N"/>
</dbReference>
<dbReference type="InterPro" id="IPR003796">
    <property type="entry name" value="RNR_NrdR-like"/>
</dbReference>
<dbReference type="NCBIfam" id="TIGR00244">
    <property type="entry name" value="transcriptional regulator NrdR"/>
    <property type="match status" value="1"/>
</dbReference>
<dbReference type="PANTHER" id="PTHR30455">
    <property type="entry name" value="TRANSCRIPTIONAL REPRESSOR NRDR"/>
    <property type="match status" value="1"/>
</dbReference>
<dbReference type="PANTHER" id="PTHR30455:SF2">
    <property type="entry name" value="TRANSCRIPTIONAL REPRESSOR NRDR"/>
    <property type="match status" value="1"/>
</dbReference>
<dbReference type="Pfam" id="PF03477">
    <property type="entry name" value="ATP-cone"/>
    <property type="match status" value="1"/>
</dbReference>
<dbReference type="Pfam" id="PF22811">
    <property type="entry name" value="Zn_ribbon_NrdR"/>
    <property type="match status" value="1"/>
</dbReference>
<dbReference type="PROSITE" id="PS51161">
    <property type="entry name" value="ATP_CONE"/>
    <property type="match status" value="1"/>
</dbReference>
<reference key="1">
    <citation type="journal article" date="2006" name="J. Bacteriol.">
        <title>Genome sequence of Aeromonas hydrophila ATCC 7966T: jack of all trades.</title>
        <authorList>
            <person name="Seshadri R."/>
            <person name="Joseph S.W."/>
            <person name="Chopra A.K."/>
            <person name="Sha J."/>
            <person name="Shaw J."/>
            <person name="Graf J."/>
            <person name="Haft D.H."/>
            <person name="Wu M."/>
            <person name="Ren Q."/>
            <person name="Rosovitz M.J."/>
            <person name="Madupu R."/>
            <person name="Tallon L."/>
            <person name="Kim M."/>
            <person name="Jin S."/>
            <person name="Vuong H."/>
            <person name="Stine O.C."/>
            <person name="Ali A."/>
            <person name="Horneman A.J."/>
            <person name="Heidelberg J.F."/>
        </authorList>
    </citation>
    <scope>NUCLEOTIDE SEQUENCE [LARGE SCALE GENOMIC DNA]</scope>
    <source>
        <strain>ATCC 7966 / DSM 30187 / BCRC 13018 / CCUG 14551 / JCM 1027 / KCTC 2358 / NCIMB 9240 / NCTC 8049</strain>
    </source>
</reference>
<keyword id="KW-0067">ATP-binding</keyword>
<keyword id="KW-0238">DNA-binding</keyword>
<keyword id="KW-0479">Metal-binding</keyword>
<keyword id="KW-0547">Nucleotide-binding</keyword>
<keyword id="KW-1185">Reference proteome</keyword>
<keyword id="KW-0678">Repressor</keyword>
<keyword id="KW-0804">Transcription</keyword>
<keyword id="KW-0805">Transcription regulation</keyword>
<keyword id="KW-0862">Zinc</keyword>
<keyword id="KW-0863">Zinc-finger</keyword>
<feature type="chain" id="PRO_1000080702" description="Transcriptional repressor NrdR">
    <location>
        <begin position="1"/>
        <end position="149"/>
    </location>
</feature>
<feature type="domain" description="ATP-cone" evidence="1">
    <location>
        <begin position="49"/>
        <end position="139"/>
    </location>
</feature>
<feature type="zinc finger region" evidence="1">
    <location>
        <begin position="3"/>
        <end position="34"/>
    </location>
</feature>
<gene>
    <name evidence="1" type="primary">nrdR</name>
    <name type="ordered locus">AHA_3334</name>
</gene>
<protein>
    <recommendedName>
        <fullName evidence="1">Transcriptional repressor NrdR</fullName>
    </recommendedName>
</protein>
<comment type="function">
    <text evidence="1">Negatively regulates transcription of bacterial ribonucleotide reductase nrd genes and operons by binding to NrdR-boxes.</text>
</comment>
<comment type="cofactor">
    <cofactor evidence="1">
        <name>Zn(2+)</name>
        <dbReference type="ChEBI" id="CHEBI:29105"/>
    </cofactor>
    <text evidence="1">Binds 1 zinc ion.</text>
</comment>
<comment type="similarity">
    <text evidence="1">Belongs to the NrdR family.</text>
</comment>
<name>NRDR_AERHH</name>
<accession>A0KNH2</accession>
<organism>
    <name type="scientific">Aeromonas hydrophila subsp. hydrophila (strain ATCC 7966 / DSM 30187 / BCRC 13018 / CCUG 14551 / JCM 1027 / KCTC 2358 / NCIMB 9240 / NCTC 8049)</name>
    <dbReference type="NCBI Taxonomy" id="380703"/>
    <lineage>
        <taxon>Bacteria</taxon>
        <taxon>Pseudomonadati</taxon>
        <taxon>Pseudomonadota</taxon>
        <taxon>Gammaproteobacteria</taxon>
        <taxon>Aeromonadales</taxon>
        <taxon>Aeromonadaceae</taxon>
        <taxon>Aeromonas</taxon>
    </lineage>
</organism>